<comment type="function">
    <text evidence="1">Catalyzes the oxidation of erythronate-4-phosphate to 3-hydroxy-2-oxo-4-phosphonooxybutanoate.</text>
</comment>
<comment type="catalytic activity">
    <reaction evidence="1">
        <text>4-phospho-D-erythronate + NAD(+) = (R)-3-hydroxy-2-oxo-4-phosphooxybutanoate + NADH + H(+)</text>
        <dbReference type="Rhea" id="RHEA:18829"/>
        <dbReference type="ChEBI" id="CHEBI:15378"/>
        <dbReference type="ChEBI" id="CHEBI:57540"/>
        <dbReference type="ChEBI" id="CHEBI:57945"/>
        <dbReference type="ChEBI" id="CHEBI:58538"/>
        <dbReference type="ChEBI" id="CHEBI:58766"/>
        <dbReference type="EC" id="1.1.1.290"/>
    </reaction>
</comment>
<comment type="pathway">
    <text evidence="1">Cofactor biosynthesis; pyridoxine 5'-phosphate biosynthesis; pyridoxine 5'-phosphate from D-erythrose 4-phosphate: step 2/5.</text>
</comment>
<comment type="subunit">
    <text evidence="1">Homodimer.</text>
</comment>
<comment type="subcellular location">
    <subcellularLocation>
        <location evidence="1">Cytoplasm</location>
    </subcellularLocation>
</comment>
<comment type="similarity">
    <text evidence="1">Belongs to the D-isomer specific 2-hydroxyacid dehydrogenase family. PdxB subfamily.</text>
</comment>
<accession>B7GY62</accession>
<organism>
    <name type="scientific">Acinetobacter baumannii (strain AB307-0294)</name>
    <dbReference type="NCBI Taxonomy" id="557600"/>
    <lineage>
        <taxon>Bacteria</taxon>
        <taxon>Pseudomonadati</taxon>
        <taxon>Pseudomonadota</taxon>
        <taxon>Gammaproteobacteria</taxon>
        <taxon>Moraxellales</taxon>
        <taxon>Moraxellaceae</taxon>
        <taxon>Acinetobacter</taxon>
        <taxon>Acinetobacter calcoaceticus/baumannii complex</taxon>
    </lineage>
</organism>
<evidence type="ECO:0000255" key="1">
    <source>
        <dbReference type="HAMAP-Rule" id="MF_01825"/>
    </source>
</evidence>
<dbReference type="EC" id="1.1.1.290" evidence="1"/>
<dbReference type="EMBL" id="CP001172">
    <property type="protein sequence ID" value="ACJ56961.1"/>
    <property type="molecule type" value="Genomic_DNA"/>
</dbReference>
<dbReference type="RefSeq" id="WP_000706080.1">
    <property type="nucleotide sequence ID" value="NZ_CP001172.1"/>
</dbReference>
<dbReference type="SMR" id="B7GY62"/>
<dbReference type="HOGENOM" id="CLU_019796_4_0_6"/>
<dbReference type="UniPathway" id="UPA00244">
    <property type="reaction ID" value="UER00310"/>
</dbReference>
<dbReference type="Proteomes" id="UP000006924">
    <property type="component" value="Chromosome"/>
</dbReference>
<dbReference type="GO" id="GO:0005829">
    <property type="term" value="C:cytosol"/>
    <property type="evidence" value="ECO:0007669"/>
    <property type="project" value="TreeGrafter"/>
</dbReference>
<dbReference type="GO" id="GO:0033711">
    <property type="term" value="F:4-phosphoerythronate dehydrogenase activity"/>
    <property type="evidence" value="ECO:0007669"/>
    <property type="project" value="UniProtKB-EC"/>
</dbReference>
<dbReference type="GO" id="GO:0051287">
    <property type="term" value="F:NAD binding"/>
    <property type="evidence" value="ECO:0007669"/>
    <property type="project" value="InterPro"/>
</dbReference>
<dbReference type="GO" id="GO:0046983">
    <property type="term" value="F:protein dimerization activity"/>
    <property type="evidence" value="ECO:0007669"/>
    <property type="project" value="InterPro"/>
</dbReference>
<dbReference type="GO" id="GO:0036001">
    <property type="term" value="P:'de novo' pyridoxal 5'-phosphate biosynthetic process"/>
    <property type="evidence" value="ECO:0007669"/>
    <property type="project" value="TreeGrafter"/>
</dbReference>
<dbReference type="GO" id="GO:0008615">
    <property type="term" value="P:pyridoxine biosynthetic process"/>
    <property type="evidence" value="ECO:0007669"/>
    <property type="project" value="UniProtKB-UniRule"/>
</dbReference>
<dbReference type="CDD" id="cd12158">
    <property type="entry name" value="ErythrP_dh"/>
    <property type="match status" value="1"/>
</dbReference>
<dbReference type="Gene3D" id="3.30.1370.170">
    <property type="match status" value="1"/>
</dbReference>
<dbReference type="Gene3D" id="3.40.50.720">
    <property type="entry name" value="NAD(P)-binding Rossmann-like Domain"/>
    <property type="match status" value="2"/>
</dbReference>
<dbReference type="HAMAP" id="MF_01825">
    <property type="entry name" value="PdxB"/>
    <property type="match status" value="1"/>
</dbReference>
<dbReference type="InterPro" id="IPR006139">
    <property type="entry name" value="D-isomer_2_OHA_DH_cat_dom"/>
</dbReference>
<dbReference type="InterPro" id="IPR029752">
    <property type="entry name" value="D-isomer_DH_CS1"/>
</dbReference>
<dbReference type="InterPro" id="IPR006140">
    <property type="entry name" value="D-isomer_DH_NAD-bd"/>
</dbReference>
<dbReference type="InterPro" id="IPR020921">
    <property type="entry name" value="Erythronate-4-P_DHase"/>
</dbReference>
<dbReference type="InterPro" id="IPR024531">
    <property type="entry name" value="Erythronate-4-P_DHase_dimer"/>
</dbReference>
<dbReference type="InterPro" id="IPR036291">
    <property type="entry name" value="NAD(P)-bd_dom_sf"/>
</dbReference>
<dbReference type="InterPro" id="IPR038251">
    <property type="entry name" value="PdxB_dimer_sf"/>
</dbReference>
<dbReference type="PANTHER" id="PTHR42938">
    <property type="entry name" value="FORMATE DEHYDROGENASE 1"/>
    <property type="match status" value="1"/>
</dbReference>
<dbReference type="PANTHER" id="PTHR42938:SF9">
    <property type="entry name" value="FORMATE DEHYDROGENASE 1"/>
    <property type="match status" value="1"/>
</dbReference>
<dbReference type="Pfam" id="PF00389">
    <property type="entry name" value="2-Hacid_dh"/>
    <property type="match status" value="1"/>
</dbReference>
<dbReference type="Pfam" id="PF02826">
    <property type="entry name" value="2-Hacid_dh_C"/>
    <property type="match status" value="1"/>
</dbReference>
<dbReference type="Pfam" id="PF11890">
    <property type="entry name" value="DUF3410"/>
    <property type="match status" value="1"/>
</dbReference>
<dbReference type="SUPFAM" id="SSF52283">
    <property type="entry name" value="Formate/glycerate dehydrogenase catalytic domain-like"/>
    <property type="match status" value="1"/>
</dbReference>
<dbReference type="SUPFAM" id="SSF51735">
    <property type="entry name" value="NAD(P)-binding Rossmann-fold domains"/>
    <property type="match status" value="1"/>
</dbReference>
<dbReference type="PROSITE" id="PS00065">
    <property type="entry name" value="D_2_HYDROXYACID_DH_1"/>
    <property type="match status" value="1"/>
</dbReference>
<reference key="1">
    <citation type="journal article" date="2008" name="J. Bacteriol.">
        <title>Comparative genome sequence analysis of multidrug-resistant Acinetobacter baumannii.</title>
        <authorList>
            <person name="Adams M.D."/>
            <person name="Goglin K."/>
            <person name="Molyneaux N."/>
            <person name="Hujer K.M."/>
            <person name="Lavender H."/>
            <person name="Jamison J.J."/>
            <person name="MacDonald I.J."/>
            <person name="Martin K.M."/>
            <person name="Russo T."/>
            <person name="Campagnari A.A."/>
            <person name="Hujer A.M."/>
            <person name="Bonomo R.A."/>
            <person name="Gill S.R."/>
        </authorList>
    </citation>
    <scope>NUCLEOTIDE SEQUENCE [LARGE SCALE GENOMIC DNA]</scope>
    <source>
        <strain>AB307-0294</strain>
    </source>
</reference>
<name>PDXB_ACIB3</name>
<proteinExistence type="inferred from homology"/>
<protein>
    <recommendedName>
        <fullName evidence="1">Erythronate-4-phosphate dehydrogenase</fullName>
        <ecNumber evidence="1">1.1.1.290</ecNumber>
    </recommendedName>
</protein>
<sequence>MKIVADENLAFTDYFFSEFGDIQHKAGRTLTHTDVQDAEALLVRSVTAVNESLIQNTALKYVGSATIGTDHLDIQALEKHGITWANAAGCNAQAVAEYVITALLHLDASLLEQQEKFTLGIVGLGNVGKRLVYMAQLLGWKVIGFDPYVQLDSIENVSFQALLQQANAVSIHVPLTKKGEHATYHLFDEKAFAALQPNTILINSARGPVVKEAALIEDIQRTQRKVVLDVFEHEPVISEELLNMLALATPHIAGYSLEGKARGTQMIYEAFCQKFGYEINKRFETQLPACEDYFSGHDLKAVLKQKLSQIYDIAQDDANIRACVKEGKVEQKAFDLLRKNYPLRREWAAHGGPQA</sequence>
<gene>
    <name evidence="1" type="primary">pdxB</name>
    <name type="ordered locus">ABBFA_000839</name>
</gene>
<keyword id="KW-0963">Cytoplasm</keyword>
<keyword id="KW-0520">NAD</keyword>
<keyword id="KW-0560">Oxidoreductase</keyword>
<keyword id="KW-0664">Pyridoxine biosynthesis</keyword>
<feature type="chain" id="PRO_1000188251" description="Erythronate-4-phosphate dehydrogenase">
    <location>
        <begin position="1"/>
        <end position="355"/>
    </location>
</feature>
<feature type="active site" evidence="1">
    <location>
        <position position="206"/>
    </location>
</feature>
<feature type="active site" evidence="1">
    <location>
        <position position="234"/>
    </location>
</feature>
<feature type="active site" description="Proton donor" evidence="1">
    <location>
        <position position="251"/>
    </location>
</feature>
<feature type="binding site" evidence="1">
    <location>
        <position position="45"/>
    </location>
    <ligand>
        <name>substrate</name>
    </ligand>
</feature>
<feature type="binding site" evidence="1">
    <location>
        <position position="66"/>
    </location>
    <ligand>
        <name>substrate</name>
    </ligand>
</feature>
<feature type="binding site" evidence="1">
    <location>
        <position position="146"/>
    </location>
    <ligand>
        <name>NAD(+)</name>
        <dbReference type="ChEBI" id="CHEBI:57540"/>
    </ligand>
</feature>
<feature type="binding site" evidence="1">
    <location>
        <position position="229"/>
    </location>
    <ligand>
        <name>NAD(+)</name>
        <dbReference type="ChEBI" id="CHEBI:57540"/>
    </ligand>
</feature>
<feature type="binding site" evidence="1">
    <location>
        <position position="254"/>
    </location>
    <ligand>
        <name>NAD(+)</name>
        <dbReference type="ChEBI" id="CHEBI:57540"/>
    </ligand>
</feature>
<feature type="binding site" evidence="1">
    <location>
        <position position="255"/>
    </location>
    <ligand>
        <name>substrate</name>
    </ligand>
</feature>